<name>RISB_ACTPL</name>
<proteinExistence type="inferred from homology"/>
<sequence>MAKITGNLVATGLKFGIVTARFNDFINDKLLSGAIDTLVRHGAYENDIDTAWVPGAFEIPLVAKKMANSGKYDAVICLGTVIRGSTTHYDYVCNEAAKGIGAVALETGVPVIFGVLTTENIEQAIERAGTKAGNKGSECALGAIEIVNVLKAI</sequence>
<comment type="function">
    <text evidence="1">Catalyzes the formation of 6,7-dimethyl-8-ribityllumazine by condensation of 5-amino-6-(D-ribitylamino)uracil with 3,4-dihydroxy-2-butanone 4-phosphate. This is the penultimate step in the biosynthesis of riboflavin.</text>
</comment>
<comment type="catalytic activity">
    <reaction evidence="1">
        <text>(2S)-2-hydroxy-3-oxobutyl phosphate + 5-amino-6-(D-ribitylamino)uracil = 6,7-dimethyl-8-(1-D-ribityl)lumazine + phosphate + 2 H2O + H(+)</text>
        <dbReference type="Rhea" id="RHEA:26152"/>
        <dbReference type="ChEBI" id="CHEBI:15377"/>
        <dbReference type="ChEBI" id="CHEBI:15378"/>
        <dbReference type="ChEBI" id="CHEBI:15934"/>
        <dbReference type="ChEBI" id="CHEBI:43474"/>
        <dbReference type="ChEBI" id="CHEBI:58201"/>
        <dbReference type="ChEBI" id="CHEBI:58830"/>
        <dbReference type="EC" id="2.5.1.78"/>
    </reaction>
</comment>
<comment type="pathway">
    <text evidence="1">Cofactor biosynthesis; riboflavin biosynthesis; riboflavin from 2-hydroxy-3-oxobutyl phosphate and 5-amino-6-(D-ribitylamino)uracil: step 1/2.</text>
</comment>
<comment type="subunit">
    <text evidence="1">Forms an icosahedral capsid composed of 60 subunits, arranged as a dodecamer of pentamers.</text>
</comment>
<comment type="similarity">
    <text evidence="1">Belongs to the DMRL synthase family.</text>
</comment>
<keyword id="KW-0686">Riboflavin biosynthesis</keyword>
<keyword id="KW-0808">Transferase</keyword>
<feature type="chain" id="PRO_0000134705" description="6,7-dimethyl-8-ribityllumazine synthase">
    <location>
        <begin position="1"/>
        <end position="153"/>
    </location>
</feature>
<feature type="active site" description="Proton donor" evidence="1">
    <location>
        <position position="88"/>
    </location>
</feature>
<feature type="binding site" evidence="1">
    <location>
        <position position="22"/>
    </location>
    <ligand>
        <name>5-amino-6-(D-ribitylamino)uracil</name>
        <dbReference type="ChEBI" id="CHEBI:15934"/>
    </ligand>
</feature>
<feature type="binding site" evidence="1">
    <location>
        <begin position="56"/>
        <end position="58"/>
    </location>
    <ligand>
        <name>5-amino-6-(D-ribitylamino)uracil</name>
        <dbReference type="ChEBI" id="CHEBI:15934"/>
    </ligand>
</feature>
<feature type="binding site" evidence="1">
    <location>
        <begin position="80"/>
        <end position="82"/>
    </location>
    <ligand>
        <name>5-amino-6-(D-ribitylamino)uracil</name>
        <dbReference type="ChEBI" id="CHEBI:15934"/>
    </ligand>
</feature>
<feature type="binding site" evidence="1">
    <location>
        <begin position="85"/>
        <end position="86"/>
    </location>
    <ligand>
        <name>(2S)-2-hydroxy-3-oxobutyl phosphate</name>
        <dbReference type="ChEBI" id="CHEBI:58830"/>
    </ligand>
</feature>
<feature type="binding site" evidence="1">
    <location>
        <position position="113"/>
    </location>
    <ligand>
        <name>5-amino-6-(D-ribitylamino)uracil</name>
        <dbReference type="ChEBI" id="CHEBI:15934"/>
    </ligand>
</feature>
<feature type="binding site" evidence="1">
    <location>
        <position position="127"/>
    </location>
    <ligand>
        <name>(2S)-2-hydroxy-3-oxobutyl phosphate</name>
        <dbReference type="ChEBI" id="CHEBI:58830"/>
    </ligand>
</feature>
<reference key="1">
    <citation type="journal article" date="1995" name="J. Bacteriol.">
        <title>Characterization of Actinobacillus pleuropneumoniae riboflavin biosynthesis genes.</title>
        <authorList>
            <person name="Fuller T.E."/>
            <person name="Mulks M.H."/>
        </authorList>
    </citation>
    <scope>NUCLEOTIDE SEQUENCE [GENOMIC DNA]</scope>
    <source>
        <strain>ISU-178 / Serotype 5</strain>
    </source>
</reference>
<organism>
    <name type="scientific">Actinobacillus pleuropneumoniae</name>
    <name type="common">Haemophilus pleuropneumoniae</name>
    <dbReference type="NCBI Taxonomy" id="715"/>
    <lineage>
        <taxon>Bacteria</taxon>
        <taxon>Pseudomonadati</taxon>
        <taxon>Pseudomonadota</taxon>
        <taxon>Gammaproteobacteria</taxon>
        <taxon>Pasteurellales</taxon>
        <taxon>Pasteurellaceae</taxon>
        <taxon>Actinobacillus</taxon>
    </lineage>
</organism>
<dbReference type="EC" id="2.5.1.78" evidence="1"/>
<dbReference type="EMBL" id="U27202">
    <property type="protein sequence ID" value="AAA86525.1"/>
    <property type="molecule type" value="Genomic_DNA"/>
</dbReference>
<dbReference type="PIR" id="T50549">
    <property type="entry name" value="T50549"/>
</dbReference>
<dbReference type="RefSeq" id="WP_247797553.1">
    <property type="nucleotide sequence ID" value="NZ_CP063424.1"/>
</dbReference>
<dbReference type="SMR" id="P50856"/>
<dbReference type="BRENDA" id="2.5.1.78">
    <property type="organism ID" value="123"/>
</dbReference>
<dbReference type="UniPathway" id="UPA00275">
    <property type="reaction ID" value="UER00404"/>
</dbReference>
<dbReference type="GO" id="GO:0005829">
    <property type="term" value="C:cytosol"/>
    <property type="evidence" value="ECO:0007669"/>
    <property type="project" value="TreeGrafter"/>
</dbReference>
<dbReference type="GO" id="GO:0009349">
    <property type="term" value="C:riboflavin synthase complex"/>
    <property type="evidence" value="ECO:0007669"/>
    <property type="project" value="InterPro"/>
</dbReference>
<dbReference type="GO" id="GO:0000906">
    <property type="term" value="F:6,7-dimethyl-8-ribityllumazine synthase activity"/>
    <property type="evidence" value="ECO:0007669"/>
    <property type="project" value="UniProtKB-UniRule"/>
</dbReference>
<dbReference type="GO" id="GO:0009231">
    <property type="term" value="P:riboflavin biosynthetic process"/>
    <property type="evidence" value="ECO:0007669"/>
    <property type="project" value="UniProtKB-UniRule"/>
</dbReference>
<dbReference type="CDD" id="cd09209">
    <property type="entry name" value="Lumazine_synthase-I"/>
    <property type="match status" value="1"/>
</dbReference>
<dbReference type="FunFam" id="3.40.50.960:FF:000001">
    <property type="entry name" value="6,7-dimethyl-8-ribityllumazine synthase"/>
    <property type="match status" value="1"/>
</dbReference>
<dbReference type="Gene3D" id="3.40.50.960">
    <property type="entry name" value="Lumazine/riboflavin synthase"/>
    <property type="match status" value="1"/>
</dbReference>
<dbReference type="HAMAP" id="MF_00178">
    <property type="entry name" value="Lumazine_synth"/>
    <property type="match status" value="1"/>
</dbReference>
<dbReference type="InterPro" id="IPR034964">
    <property type="entry name" value="LS"/>
</dbReference>
<dbReference type="InterPro" id="IPR002180">
    <property type="entry name" value="LS/RS"/>
</dbReference>
<dbReference type="InterPro" id="IPR036467">
    <property type="entry name" value="LS/RS_sf"/>
</dbReference>
<dbReference type="NCBIfam" id="TIGR00114">
    <property type="entry name" value="lumazine-synth"/>
    <property type="match status" value="1"/>
</dbReference>
<dbReference type="NCBIfam" id="NF000812">
    <property type="entry name" value="PRK00061.1-4"/>
    <property type="match status" value="1"/>
</dbReference>
<dbReference type="PANTHER" id="PTHR21058:SF0">
    <property type="entry name" value="6,7-DIMETHYL-8-RIBITYLLUMAZINE SYNTHASE"/>
    <property type="match status" value="1"/>
</dbReference>
<dbReference type="PANTHER" id="PTHR21058">
    <property type="entry name" value="6,7-DIMETHYL-8-RIBITYLLUMAZINE SYNTHASE DMRL SYNTHASE LUMAZINE SYNTHASE"/>
    <property type="match status" value="1"/>
</dbReference>
<dbReference type="Pfam" id="PF00885">
    <property type="entry name" value="DMRL_synthase"/>
    <property type="match status" value="1"/>
</dbReference>
<dbReference type="SUPFAM" id="SSF52121">
    <property type="entry name" value="Lumazine synthase"/>
    <property type="match status" value="1"/>
</dbReference>
<evidence type="ECO:0000255" key="1">
    <source>
        <dbReference type="HAMAP-Rule" id="MF_00178"/>
    </source>
</evidence>
<protein>
    <recommendedName>
        <fullName evidence="1">6,7-dimethyl-8-ribityllumazine synthase</fullName>
        <shortName evidence="1">DMRL synthase</shortName>
        <shortName evidence="1">LS</shortName>
        <shortName evidence="1">Lumazine synthase</shortName>
        <ecNumber evidence="1">2.5.1.78</ecNumber>
    </recommendedName>
</protein>
<accession>P50856</accession>
<gene>
    <name evidence="1" type="primary">ribH</name>
</gene>